<reference key="1">
    <citation type="journal article" date="2000" name="Am. J. Bot.">
        <title>Utility of 17 chloroplast genes for inferring the phylogeny of the basal angiosperms.</title>
        <authorList>
            <person name="Graham S.W."/>
            <person name="Olmstead R.G."/>
        </authorList>
    </citation>
    <scope>NUCLEOTIDE SEQUENCE [GENOMIC DNA]</scope>
</reference>
<reference key="2">
    <citation type="journal article" date="2007" name="Proc. Natl. Acad. Sci. U.S.A.">
        <title>Using plastid genome-scale data to resolve enigmatic relationships among basal angiosperms.</title>
        <authorList>
            <person name="Moore M.J."/>
            <person name="Bell C.D."/>
            <person name="Soltis P.S."/>
            <person name="Soltis D.E."/>
        </authorList>
    </citation>
    <scope>NUCLEOTIDE SEQUENCE [LARGE SCALE GENOMIC DNA]</scope>
</reference>
<sequence length="43" mass="4662">METATLVAISISGLLVSFTGYALYTAFGQPSQQLRDPFEEHGD</sequence>
<name>PSBN_CERDE</name>
<feature type="chain" id="PRO_0000207881" description="Protein PsbN">
    <location>
        <begin position="1"/>
        <end position="43"/>
    </location>
</feature>
<feature type="transmembrane region" description="Helical" evidence="1">
    <location>
        <begin position="5"/>
        <end position="27"/>
    </location>
</feature>
<keyword id="KW-0150">Chloroplast</keyword>
<keyword id="KW-0472">Membrane</keyword>
<keyword id="KW-0934">Plastid</keyword>
<keyword id="KW-0793">Thylakoid</keyword>
<keyword id="KW-0812">Transmembrane</keyword>
<keyword id="KW-1133">Transmembrane helix</keyword>
<geneLocation type="chloroplast"/>
<dbReference type="EMBL" id="AF123847">
    <property type="protein sequence ID" value="AAG26267.1"/>
    <property type="molecule type" value="Genomic_DNA"/>
</dbReference>
<dbReference type="EMBL" id="EF614270">
    <property type="protein sequence ID" value="ABQ81479.1"/>
    <property type="molecule type" value="Genomic_DNA"/>
</dbReference>
<dbReference type="RefSeq" id="YP_001542475.1">
    <property type="nucleotide sequence ID" value="NC_009962.1"/>
</dbReference>
<dbReference type="SMR" id="Q7J196"/>
<dbReference type="GeneID" id="5729446"/>
<dbReference type="GO" id="GO:0009535">
    <property type="term" value="C:chloroplast thylakoid membrane"/>
    <property type="evidence" value="ECO:0007669"/>
    <property type="project" value="UniProtKB-SubCell"/>
</dbReference>
<dbReference type="GO" id="GO:0015979">
    <property type="term" value="P:photosynthesis"/>
    <property type="evidence" value="ECO:0007669"/>
    <property type="project" value="InterPro"/>
</dbReference>
<dbReference type="HAMAP" id="MF_00293">
    <property type="entry name" value="PSII_PsbN"/>
    <property type="match status" value="1"/>
</dbReference>
<dbReference type="InterPro" id="IPR003398">
    <property type="entry name" value="PSII_PsbN"/>
</dbReference>
<dbReference type="PANTHER" id="PTHR35326">
    <property type="entry name" value="PROTEIN PSBN"/>
    <property type="match status" value="1"/>
</dbReference>
<dbReference type="PANTHER" id="PTHR35326:SF3">
    <property type="entry name" value="PROTEIN PSBN"/>
    <property type="match status" value="1"/>
</dbReference>
<dbReference type="Pfam" id="PF02468">
    <property type="entry name" value="PsbN"/>
    <property type="match status" value="1"/>
</dbReference>
<proteinExistence type="inferred from homology"/>
<comment type="function">
    <text evidence="1">May play a role in photosystem I and II biogenesis.</text>
</comment>
<comment type="subcellular location">
    <subcellularLocation>
        <location evidence="1">Plastid</location>
        <location evidence="1">Chloroplast thylakoid membrane</location>
        <topology evidence="1">Single-pass membrane protein</topology>
    </subcellularLocation>
</comment>
<comment type="similarity">
    <text evidence="1">Belongs to the PsbN family.</text>
</comment>
<comment type="caution">
    <text evidence="1">Originally thought to be a component of PSII; based on experiments in Synechocystis, N.tabacum and barley, and its absence from PSII in T.elongatus and T.vulcanus, this is probably not true.</text>
</comment>
<accession>Q7J196</accession>
<accession>A8SED1</accession>
<evidence type="ECO:0000255" key="1">
    <source>
        <dbReference type="HAMAP-Rule" id="MF_00293"/>
    </source>
</evidence>
<gene>
    <name evidence="1" type="primary">psbN</name>
</gene>
<organism>
    <name type="scientific">Ceratophyllum demersum</name>
    <name type="common">Rigid hornwort</name>
    <name type="synonym">Coontail</name>
    <dbReference type="NCBI Taxonomy" id="4428"/>
    <lineage>
        <taxon>Eukaryota</taxon>
        <taxon>Viridiplantae</taxon>
        <taxon>Streptophyta</taxon>
        <taxon>Embryophyta</taxon>
        <taxon>Tracheophyta</taxon>
        <taxon>Spermatophyta</taxon>
        <taxon>Magnoliopsida</taxon>
        <taxon>Ceratophyllales</taxon>
        <taxon>Ceratophyllaceae</taxon>
        <taxon>Ceratophyllum</taxon>
    </lineage>
</organism>
<protein>
    <recommendedName>
        <fullName evidence="1">Protein PsbN</fullName>
    </recommendedName>
</protein>